<gene>
    <name type="primary">PRNP</name>
    <name type="synonym">PRP</name>
</gene>
<name>PRIO_SAISC</name>
<feature type="signal peptide" evidence="1">
    <location>
        <begin position="1"/>
        <end position="22"/>
    </location>
</feature>
<feature type="chain" id="PRO_0000025725" description="Major prion protein">
    <location>
        <begin position="23"/>
        <end position="237"/>
    </location>
</feature>
<feature type="propeptide" id="PRO_0000025726" description="Removed in mature form" evidence="1">
    <location>
        <begin position="238"/>
        <end position="260"/>
    </location>
</feature>
<feature type="repeat" description="1">
    <location>
        <begin position="51"/>
        <end position="58"/>
    </location>
</feature>
<feature type="repeat" description="2">
    <location>
        <begin position="59"/>
        <end position="66"/>
    </location>
</feature>
<feature type="repeat" description="3">
    <location>
        <begin position="67"/>
        <end position="74"/>
    </location>
</feature>
<feature type="repeat" description="4">
    <location>
        <begin position="75"/>
        <end position="82"/>
    </location>
</feature>
<feature type="repeat" description="5">
    <location>
        <begin position="83"/>
        <end position="90"/>
    </location>
</feature>
<feature type="repeat" description="6">
    <location>
        <begin position="91"/>
        <end position="98"/>
    </location>
</feature>
<feature type="region of interest" description="Interaction with GRB2, ERI3 and SYN1" evidence="4">
    <location>
        <begin position="23"/>
        <end position="237"/>
    </location>
</feature>
<feature type="region of interest" description="Disordered" evidence="6">
    <location>
        <begin position="26"/>
        <end position="112"/>
    </location>
</feature>
<feature type="region of interest" description="6 X 8 AA tandem repeats of P-H-G-G-G-W-G-Q">
    <location>
        <begin position="51"/>
        <end position="98"/>
    </location>
</feature>
<feature type="compositionally biased region" description="Gly residues" evidence="6">
    <location>
        <begin position="52"/>
        <end position="102"/>
    </location>
</feature>
<feature type="binding site" evidence="2">
    <location>
        <position position="68"/>
    </location>
    <ligand>
        <name>Cu(2+)</name>
        <dbReference type="ChEBI" id="CHEBI:29036"/>
        <label>1</label>
    </ligand>
</feature>
<feature type="binding site" evidence="2">
    <location>
        <position position="69"/>
    </location>
    <ligand>
        <name>Cu(2+)</name>
        <dbReference type="ChEBI" id="CHEBI:29036"/>
        <label>1</label>
    </ligand>
</feature>
<feature type="binding site" evidence="2">
    <location>
        <position position="70"/>
    </location>
    <ligand>
        <name>Cu(2+)</name>
        <dbReference type="ChEBI" id="CHEBI:29036"/>
        <label>1</label>
    </ligand>
</feature>
<feature type="binding site" evidence="2">
    <location>
        <position position="76"/>
    </location>
    <ligand>
        <name>Cu(2+)</name>
        <dbReference type="ChEBI" id="CHEBI:29036"/>
        <label>2</label>
    </ligand>
</feature>
<feature type="binding site" evidence="2">
    <location>
        <position position="77"/>
    </location>
    <ligand>
        <name>Cu(2+)</name>
        <dbReference type="ChEBI" id="CHEBI:29036"/>
        <label>2</label>
    </ligand>
</feature>
<feature type="binding site" evidence="2">
    <location>
        <position position="78"/>
    </location>
    <ligand>
        <name>Cu(2+)</name>
        <dbReference type="ChEBI" id="CHEBI:29036"/>
        <label>2</label>
    </ligand>
</feature>
<feature type="binding site" evidence="2">
    <location>
        <position position="84"/>
    </location>
    <ligand>
        <name>Cu(2+)</name>
        <dbReference type="ChEBI" id="CHEBI:29036"/>
        <label>3</label>
    </ligand>
</feature>
<feature type="binding site" evidence="2">
    <location>
        <position position="85"/>
    </location>
    <ligand>
        <name>Cu(2+)</name>
        <dbReference type="ChEBI" id="CHEBI:29036"/>
        <label>3</label>
    </ligand>
</feature>
<feature type="binding site" evidence="2">
    <location>
        <position position="86"/>
    </location>
    <ligand>
        <name>Cu(2+)</name>
        <dbReference type="ChEBI" id="CHEBI:29036"/>
        <label>3</label>
    </ligand>
</feature>
<feature type="binding site" evidence="2">
    <location>
        <position position="92"/>
    </location>
    <ligand>
        <name>Cu(2+)</name>
        <dbReference type="ChEBI" id="CHEBI:29036"/>
        <label>4</label>
    </ligand>
</feature>
<feature type="binding site" evidence="2">
    <location>
        <position position="93"/>
    </location>
    <ligand>
        <name>Cu(2+)</name>
        <dbReference type="ChEBI" id="CHEBI:29036"/>
        <label>4</label>
    </ligand>
</feature>
<feature type="binding site" evidence="2">
    <location>
        <position position="94"/>
    </location>
    <ligand>
        <name>Cu(2+)</name>
        <dbReference type="ChEBI" id="CHEBI:29036"/>
        <label>4</label>
    </ligand>
</feature>
<feature type="lipid moiety-binding region" description="GPI-anchor amidated serine" evidence="3">
    <location>
        <position position="237"/>
    </location>
</feature>
<feature type="glycosylation site" description="N-linked (GlcNAc...) asparagine" evidence="5">
    <location>
        <position position="188"/>
    </location>
</feature>
<feature type="glycosylation site" description="N-linked (GlcNAc...) asparagine" evidence="5">
    <location>
        <position position="204"/>
    </location>
</feature>
<feature type="disulfide bond" evidence="3">
    <location>
        <begin position="186"/>
        <end position="221"/>
    </location>
</feature>
<feature type="sequence conflict" description="In Ref. 2; AAA68636." evidence="7" ref="2">
    <original>C</original>
    <variation>Y</variation>
    <location>
        <position position="6"/>
    </location>
</feature>
<feature type="sequence conflict" description="In Ref. 2; AAA68636." evidence="7" ref="2">
    <location>
        <begin position="53"/>
        <end position="60"/>
    </location>
</feature>
<feature type="sequence conflict" description="In Ref. 2; AAA68636." evidence="7" ref="2">
    <original>R</original>
    <variation>K</variation>
    <location>
        <position position="171"/>
    </location>
</feature>
<sequence>MANLGCWMLVLFVATWSDLGLCKKRPKPGGWNTGGSRYPGQGSPGGNRYPPQGGGWGQPHGGGWGQPHGGGWGQPHGGGWGQPHGGGWGQPHGGGWGQGGGTHNQWNKPSKPKTNMKHMAGAAAAGAVVGGLGGYMLGSAMSRPLIHFGNDYEDRYYRENMYRYPSQVYYRPVDQYSNQNNFVHDCVNVTIKQHTVTTTTKGENFTETDVKMMERVVEQMCITQYEKESQAYYQRGSSMVLFSSPPVILLISFLIFLIVG</sequence>
<proteinExistence type="inferred from homology"/>
<organism>
    <name type="scientific">Saimiri sciureus</name>
    <name type="common">Common squirrel monkey</name>
    <dbReference type="NCBI Taxonomy" id="9521"/>
    <lineage>
        <taxon>Eukaryota</taxon>
        <taxon>Metazoa</taxon>
        <taxon>Chordata</taxon>
        <taxon>Craniata</taxon>
        <taxon>Vertebrata</taxon>
        <taxon>Euteleostomi</taxon>
        <taxon>Mammalia</taxon>
        <taxon>Eutheria</taxon>
        <taxon>Euarchontoglires</taxon>
        <taxon>Primates</taxon>
        <taxon>Haplorrhini</taxon>
        <taxon>Platyrrhini</taxon>
        <taxon>Cebidae</taxon>
        <taxon>Saimiriinae</taxon>
        <taxon>Saimiri</taxon>
    </lineage>
</organism>
<accession>P40258</accession>
<keyword id="KW-0034">Amyloid</keyword>
<keyword id="KW-1003">Cell membrane</keyword>
<keyword id="KW-0186">Copper</keyword>
<keyword id="KW-1015">Disulfide bond</keyword>
<keyword id="KW-0325">Glycoprotein</keyword>
<keyword id="KW-0333">Golgi apparatus</keyword>
<keyword id="KW-0336">GPI-anchor</keyword>
<keyword id="KW-0449">Lipoprotein</keyword>
<keyword id="KW-0472">Membrane</keyword>
<keyword id="KW-0479">Metal-binding</keyword>
<keyword id="KW-0640">Prion</keyword>
<keyword id="KW-0677">Repeat</keyword>
<keyword id="KW-0732">Signal</keyword>
<keyword id="KW-0862">Zinc</keyword>
<comment type="function">
    <text evidence="2 4">Its primary physiological function is unclear. Has cytoprotective activity against internal or environmental stresses. May play a role in neuronal development and synaptic plasticity. May be required for neuronal myelin sheath maintenance. May play a role in iron uptake and iron homeostasis. Soluble oligomers are toxic to cultured neuroblastoma cells and induce apoptosis (in vitro). Association with GPC1 (via its heparan sulfate chains) targets PRNP to lipid rafts. Also provides Cu(2+) or Zn(2+) for the ascorbate-mediated GPC1 deaminase degradation of its heparan sulfate side chains (By similarity).</text>
</comment>
<comment type="subunit">
    <text evidence="2 4">Monomer and homodimer. Has a tendency to aggregate into amyloid fibrils containing a cross-beta spine, formed by a steric zipper of superposed beta-strands. Soluble oligomers may represent an intermediate stage on the path to fibril formation. Copper binding may promote oligomerization. Interacts with GRB2, APP, ERI3/PRNPIP and SYN1. Mislocalized cytosolically exposed PrP interacts with MGRN1; this interaction alters MGRN1 subcellular location and causes lysosomal enlargement. Interacts with KIAA1191.</text>
</comment>
<comment type="subcellular location">
    <subcellularLocation>
        <location evidence="2">Cell membrane</location>
        <topology evidence="2">Lipid-anchor</topology>
        <topology evidence="2">GPI-anchor</topology>
    </subcellularLocation>
    <subcellularLocation>
        <location evidence="4">Golgi apparatus</location>
    </subcellularLocation>
    <text evidence="2">Targeted to lipid rafts via association with the heparan sulfate chains of GPC1. Colocates, in the presence of Cu(2+), to vesicles in para- and perinuclear regions, where both proteins undergo internalization. Heparin displaces PRNP from lipid rafts and promotes endocytosis.</text>
</comment>
<comment type="domain">
    <text evidence="2">The normal, monomeric form has a mainly alpha-helical structure. The disease-associated, protease-resistant form forms amyloid fibrils containing a cross-beta spine, formed by a steric zipper of superposed beta-strands. Disease mutations may favor intermolecular contacts via short beta strands, and may thereby trigger oligomerization.</text>
</comment>
<comment type="domain">
    <text evidence="2">Contains an N-terminal region composed of octamer repeats. At low copper concentrations, the sidechains of His residues from three or four repeats contribute to the binding of a single copper ion. Alternatively, a copper ion can be bound by interaction with the sidechain and backbone amide nitrogen of a single His residue. The observed copper binding stoichiometry suggests that two repeat regions cooperate to stabilize the binding of a single copper ion. At higher copper concentrations, each octamer can bind one copper ion by interactions with the His sidechain and Gly backbone atoms. A mixture of binding types may occur, especially in the case of octamer repeat expansion. Copper binding may stabilize the conformation of this region and may promote oligomerization.</text>
</comment>
<comment type="disease">
    <text evidence="7">Found in high quantity in the brain of humans and animals infected with degenerative neurological diseases such as kuru, Creutzfeldt-Jakob disease (CJD), Gerstmann-Straussler syndrome (GSS), scrapie, bovine spongiform encephalopathy (BSE), transmissible mink encephalopathy (TME), etc.</text>
</comment>
<comment type="similarity">
    <text evidence="7">Belongs to the prion family.</text>
</comment>
<dbReference type="EMBL" id="U08310">
    <property type="protein sequence ID" value="AAC50098.1"/>
    <property type="molecule type" value="Genomic_DNA"/>
</dbReference>
<dbReference type="EMBL" id="U15165">
    <property type="protein sequence ID" value="AAA68636.1"/>
    <property type="molecule type" value="Genomic_DNA"/>
</dbReference>
<dbReference type="PIR" id="I61848">
    <property type="entry name" value="I61848"/>
</dbReference>
<dbReference type="PIR" id="S53629">
    <property type="entry name" value="S53629"/>
</dbReference>
<dbReference type="SMR" id="P40258"/>
<dbReference type="GlyCosmos" id="P40258">
    <property type="glycosylation" value="2 sites, No reported glycans"/>
</dbReference>
<dbReference type="GO" id="GO:0005794">
    <property type="term" value="C:Golgi apparatus"/>
    <property type="evidence" value="ECO:0007669"/>
    <property type="project" value="UniProtKB-SubCell"/>
</dbReference>
<dbReference type="GO" id="GO:0005886">
    <property type="term" value="C:plasma membrane"/>
    <property type="evidence" value="ECO:0007669"/>
    <property type="project" value="UniProtKB-SubCell"/>
</dbReference>
<dbReference type="GO" id="GO:0098552">
    <property type="term" value="C:side of membrane"/>
    <property type="evidence" value="ECO:0007669"/>
    <property type="project" value="UniProtKB-KW"/>
</dbReference>
<dbReference type="GO" id="GO:0005507">
    <property type="term" value="F:copper ion binding"/>
    <property type="evidence" value="ECO:0000250"/>
    <property type="project" value="UniProtKB"/>
</dbReference>
<dbReference type="GO" id="GO:0051260">
    <property type="term" value="P:protein homooligomerization"/>
    <property type="evidence" value="ECO:0007669"/>
    <property type="project" value="InterPro"/>
</dbReference>
<dbReference type="FunFam" id="1.10.790.10:FF:000001">
    <property type="entry name" value="Major prion protein"/>
    <property type="match status" value="1"/>
</dbReference>
<dbReference type="Gene3D" id="1.10.790.10">
    <property type="entry name" value="Prion/Doppel protein, beta-ribbon domain"/>
    <property type="match status" value="1"/>
</dbReference>
<dbReference type="InterPro" id="IPR000817">
    <property type="entry name" value="Prion"/>
</dbReference>
<dbReference type="InterPro" id="IPR036924">
    <property type="entry name" value="Prion/Doppel_b-ribbon_dom_sf"/>
</dbReference>
<dbReference type="InterPro" id="IPR022416">
    <property type="entry name" value="Prion/Doppel_prot_b-ribbon_dom"/>
</dbReference>
<dbReference type="InterPro" id="IPR020949">
    <property type="entry name" value="Prion_copper_b_octapeptide"/>
</dbReference>
<dbReference type="InterPro" id="IPR025860">
    <property type="entry name" value="Prion_N"/>
</dbReference>
<dbReference type="PANTHER" id="PTHR15506">
    <property type="entry name" value="DOPPEL PRION"/>
    <property type="match status" value="1"/>
</dbReference>
<dbReference type="PANTHER" id="PTHR15506:SF2">
    <property type="entry name" value="MAJOR PRION PROTEIN"/>
    <property type="match status" value="1"/>
</dbReference>
<dbReference type="Pfam" id="PF00377">
    <property type="entry name" value="Prion"/>
    <property type="match status" value="1"/>
</dbReference>
<dbReference type="Pfam" id="PF11587">
    <property type="entry name" value="Prion_bPrPp"/>
    <property type="match status" value="1"/>
</dbReference>
<dbReference type="Pfam" id="PF03991">
    <property type="entry name" value="Prion_octapep"/>
    <property type="match status" value="1"/>
</dbReference>
<dbReference type="PRINTS" id="PR00341">
    <property type="entry name" value="PRION"/>
</dbReference>
<dbReference type="SMART" id="SM00157">
    <property type="entry name" value="PRP"/>
    <property type="match status" value="1"/>
</dbReference>
<dbReference type="SUPFAM" id="SSF54098">
    <property type="entry name" value="Prion-like"/>
    <property type="match status" value="1"/>
</dbReference>
<dbReference type="PROSITE" id="PS00291">
    <property type="entry name" value="PRION_1"/>
    <property type="match status" value="1"/>
</dbReference>
<dbReference type="PROSITE" id="PS00706">
    <property type="entry name" value="PRION_2"/>
    <property type="match status" value="1"/>
</dbReference>
<evidence type="ECO:0000250" key="1"/>
<evidence type="ECO:0000250" key="2">
    <source>
        <dbReference type="UniProtKB" id="P04156"/>
    </source>
</evidence>
<evidence type="ECO:0000250" key="3">
    <source>
        <dbReference type="UniProtKB" id="P04273"/>
    </source>
</evidence>
<evidence type="ECO:0000250" key="4">
    <source>
        <dbReference type="UniProtKB" id="P04925"/>
    </source>
</evidence>
<evidence type="ECO:0000255" key="5"/>
<evidence type="ECO:0000256" key="6">
    <source>
        <dbReference type="SAM" id="MobiDB-lite"/>
    </source>
</evidence>
<evidence type="ECO:0000305" key="7"/>
<reference key="1">
    <citation type="journal article" date="1995" name="J. Mol. Biol.">
        <title>Prion protein gene variation among primates.</title>
        <authorList>
            <person name="Schaetzl H.M."/>
            <person name="Da Costa M."/>
            <person name="Taylor L."/>
            <person name="Cohen F.E."/>
            <person name="Prusiner S.B."/>
        </authorList>
    </citation>
    <scope>NUCLEOTIDE SEQUENCE [GENOMIC DNA]</scope>
</reference>
<reference key="2">
    <citation type="journal article" date="1994" name="Proc. Natl. Acad. Sci. U.S.A.">
        <title>Infectious amyloid precursor gene sequences in primates used for experimental transmission of human spongiform encephalopathy.</title>
        <authorList>
            <person name="Cervenakova L."/>
            <person name="Brown P."/>
            <person name="Goldfarb L.G."/>
            <person name="Nagle J."/>
            <person name="Pettrone K."/>
            <person name="Rubenstein R."/>
            <person name="Dubnick M."/>
            <person name="Gibbs C.J."/>
            <person name="Gajdusek D.C."/>
        </authorList>
    </citation>
    <scope>NUCLEOTIDE SEQUENCE [GENOMIC DNA]</scope>
    <source>
        <tissue>Brain</tissue>
    </source>
</reference>
<protein>
    <recommendedName>
        <fullName>Major prion protein</fullName>
        <shortName>PrP</shortName>
    </recommendedName>
    <alternativeName>
        <fullName>PrP27-30</fullName>
    </alternativeName>
    <alternativeName>
        <fullName>PrP33-35C</fullName>
    </alternativeName>
    <cdAntigenName>CD230</cdAntigenName>
</protein>